<feature type="chain" id="PRO_1000080609" description="Putative pterin-4-alpha-carbinolamine dehydratase">
    <location>
        <begin position="1"/>
        <end position="112"/>
    </location>
</feature>
<comment type="catalytic activity">
    <reaction evidence="1">
        <text>(4aS,6R)-4a-hydroxy-L-erythro-5,6,7,8-tetrahydrobiopterin = (6R)-L-erythro-6,7-dihydrobiopterin + H2O</text>
        <dbReference type="Rhea" id="RHEA:11920"/>
        <dbReference type="ChEBI" id="CHEBI:15377"/>
        <dbReference type="ChEBI" id="CHEBI:15642"/>
        <dbReference type="ChEBI" id="CHEBI:43120"/>
        <dbReference type="EC" id="4.2.1.96"/>
    </reaction>
</comment>
<comment type="similarity">
    <text evidence="1">Belongs to the pterin-4-alpha-carbinolamine dehydratase family.</text>
</comment>
<reference key="1">
    <citation type="journal article" date="2005" name="Nucleic Acids Res.">
        <title>Genomic blueprint of Hahella chejuensis, a marine microbe producing an algicidal agent.</title>
        <authorList>
            <person name="Jeong H."/>
            <person name="Yim J.H."/>
            <person name="Lee C."/>
            <person name="Choi S.-H."/>
            <person name="Park Y.K."/>
            <person name="Yoon S.H."/>
            <person name="Hur C.-G."/>
            <person name="Kang H.-Y."/>
            <person name="Kim D."/>
            <person name="Lee H.H."/>
            <person name="Park K.H."/>
            <person name="Park S.-H."/>
            <person name="Park H.-S."/>
            <person name="Lee H.K."/>
            <person name="Oh T.K."/>
            <person name="Kim J.F."/>
        </authorList>
    </citation>
    <scope>NUCLEOTIDE SEQUENCE [LARGE SCALE GENOMIC DNA]</scope>
    <source>
        <strain>KCTC 2396</strain>
    </source>
</reference>
<proteinExistence type="inferred from homology"/>
<protein>
    <recommendedName>
        <fullName evidence="1">Putative pterin-4-alpha-carbinolamine dehydratase</fullName>
        <shortName evidence="1">PHS</shortName>
        <ecNumber evidence="1">4.2.1.96</ecNumber>
    </recommendedName>
    <alternativeName>
        <fullName evidence="1">4-alpha-hydroxy-tetrahydropterin dehydratase</fullName>
    </alternativeName>
    <alternativeName>
        <fullName evidence="1">Pterin carbinolamine dehydratase</fullName>
        <shortName evidence="1">PCD</shortName>
    </alternativeName>
</protein>
<keyword id="KW-0456">Lyase</keyword>
<keyword id="KW-1185">Reference proteome</keyword>
<accession>Q2SCE8</accession>
<organism>
    <name type="scientific">Hahella chejuensis (strain KCTC 2396)</name>
    <dbReference type="NCBI Taxonomy" id="349521"/>
    <lineage>
        <taxon>Bacteria</taxon>
        <taxon>Pseudomonadati</taxon>
        <taxon>Pseudomonadota</taxon>
        <taxon>Gammaproteobacteria</taxon>
        <taxon>Oceanospirillales</taxon>
        <taxon>Hahellaceae</taxon>
        <taxon>Hahella</taxon>
    </lineage>
</organism>
<gene>
    <name type="ordered locus">HCH_04986</name>
</gene>
<sequence>MSDTIPSCEACRPDAEKVDPAKLEKYLSQVPEWRLEERNGVQMISRDYKFKNFALALEFTNKVGAIAEEINHHPELVTEWGKVRVTWWSHTIKGLHELDFAMAKRCEAVFNA</sequence>
<evidence type="ECO:0000255" key="1">
    <source>
        <dbReference type="HAMAP-Rule" id="MF_00434"/>
    </source>
</evidence>
<name>PHS_HAHCH</name>
<dbReference type="EC" id="4.2.1.96" evidence="1"/>
<dbReference type="EMBL" id="CP000155">
    <property type="protein sequence ID" value="ABC31676.1"/>
    <property type="molecule type" value="Genomic_DNA"/>
</dbReference>
<dbReference type="RefSeq" id="WP_011398741.1">
    <property type="nucleotide sequence ID" value="NC_007645.1"/>
</dbReference>
<dbReference type="SMR" id="Q2SCE8"/>
<dbReference type="STRING" id="349521.HCH_04986"/>
<dbReference type="KEGG" id="hch:HCH_04986"/>
<dbReference type="eggNOG" id="COG2154">
    <property type="taxonomic scope" value="Bacteria"/>
</dbReference>
<dbReference type="HOGENOM" id="CLU_081974_2_2_6"/>
<dbReference type="OrthoDB" id="5294615at2"/>
<dbReference type="Proteomes" id="UP000000238">
    <property type="component" value="Chromosome"/>
</dbReference>
<dbReference type="GO" id="GO:0008124">
    <property type="term" value="F:4-alpha-hydroxytetrahydrobiopterin dehydratase activity"/>
    <property type="evidence" value="ECO:0007669"/>
    <property type="project" value="UniProtKB-UniRule"/>
</dbReference>
<dbReference type="GO" id="GO:0006729">
    <property type="term" value="P:tetrahydrobiopterin biosynthetic process"/>
    <property type="evidence" value="ECO:0007669"/>
    <property type="project" value="InterPro"/>
</dbReference>
<dbReference type="CDD" id="cd00913">
    <property type="entry name" value="PCD_DCoH_subfamily_a"/>
    <property type="match status" value="1"/>
</dbReference>
<dbReference type="Gene3D" id="3.30.1360.20">
    <property type="entry name" value="Transcriptional coactivator/pterin dehydratase"/>
    <property type="match status" value="1"/>
</dbReference>
<dbReference type="HAMAP" id="MF_00434">
    <property type="entry name" value="Pterin_4_alpha"/>
    <property type="match status" value="1"/>
</dbReference>
<dbReference type="InterPro" id="IPR036428">
    <property type="entry name" value="PCD_sf"/>
</dbReference>
<dbReference type="InterPro" id="IPR050376">
    <property type="entry name" value="Pterin-4-alpha-carb_dehyd"/>
</dbReference>
<dbReference type="InterPro" id="IPR001533">
    <property type="entry name" value="Pterin_deHydtase"/>
</dbReference>
<dbReference type="NCBIfam" id="NF002016">
    <property type="entry name" value="PRK00823.1-1"/>
    <property type="match status" value="1"/>
</dbReference>
<dbReference type="PANTHER" id="PTHR42805">
    <property type="entry name" value="PTERIN-4-ALPHA-CARBINOLAMINE DEHYDRATASE-RELATED"/>
    <property type="match status" value="1"/>
</dbReference>
<dbReference type="PANTHER" id="PTHR42805:SF1">
    <property type="entry name" value="PTERIN-4-ALPHA-CARBINOLAMINE DEHYDRATASE-RELATED"/>
    <property type="match status" value="1"/>
</dbReference>
<dbReference type="Pfam" id="PF01329">
    <property type="entry name" value="Pterin_4a"/>
    <property type="match status" value="1"/>
</dbReference>
<dbReference type="SUPFAM" id="SSF55248">
    <property type="entry name" value="PCD-like"/>
    <property type="match status" value="1"/>
</dbReference>